<feature type="chain" id="PRO_1000045439" description="High frequency lysogenization protein HflD homolog">
    <location>
        <begin position="1"/>
        <end position="205"/>
    </location>
</feature>
<evidence type="ECO:0000255" key="1">
    <source>
        <dbReference type="HAMAP-Rule" id="MF_00695"/>
    </source>
</evidence>
<name>HFLD_SHEB8</name>
<reference key="1">
    <citation type="submission" date="2007-07" db="EMBL/GenBank/DDBJ databases">
        <title>Complete sequence of chromosome of Shewanella baltica OS185.</title>
        <authorList>
            <consortium name="US DOE Joint Genome Institute"/>
            <person name="Copeland A."/>
            <person name="Lucas S."/>
            <person name="Lapidus A."/>
            <person name="Barry K."/>
            <person name="Glavina del Rio T."/>
            <person name="Dalin E."/>
            <person name="Tice H."/>
            <person name="Pitluck S."/>
            <person name="Sims D."/>
            <person name="Brettin T."/>
            <person name="Bruce D."/>
            <person name="Detter J.C."/>
            <person name="Han C."/>
            <person name="Schmutz J."/>
            <person name="Larimer F."/>
            <person name="Land M."/>
            <person name="Hauser L."/>
            <person name="Kyrpides N."/>
            <person name="Mikhailova N."/>
            <person name="Brettar I."/>
            <person name="Rodrigues J."/>
            <person name="Konstantinidis K."/>
            <person name="Tiedje J."/>
            <person name="Richardson P."/>
        </authorList>
    </citation>
    <scope>NUCLEOTIDE SEQUENCE [LARGE SCALE GENOMIC DNA]</scope>
    <source>
        <strain>OS185</strain>
    </source>
</reference>
<sequence length="205" mass="22749">MNEQLVNRTMAFAGILQAIAQVQHLARHGELDNAELAASLNTILVTNPDNTADVYQDKIVLQKGYKLILNQLGDSSQKDVEITRYLVGVLALERKLVRSNSGLGMLAERINQVNRQLHHFAITDEQVIANLASIYSDIISNLGPKIQISGNPVCLQRPIVQQKIRALLLAAMRSAVLWRQLGGKRRHLVFARKAIVDTAKKSLTL</sequence>
<proteinExistence type="inferred from homology"/>
<dbReference type="EMBL" id="CP000753">
    <property type="protein sequence ID" value="ABS08609.1"/>
    <property type="molecule type" value="Genomic_DNA"/>
</dbReference>
<dbReference type="RefSeq" id="WP_006081942.1">
    <property type="nucleotide sequence ID" value="NC_009665.1"/>
</dbReference>
<dbReference type="SMR" id="A6WP70"/>
<dbReference type="KEGG" id="sbm:Shew185_2472"/>
<dbReference type="HOGENOM" id="CLU_098920_0_0_6"/>
<dbReference type="GO" id="GO:0005737">
    <property type="term" value="C:cytoplasm"/>
    <property type="evidence" value="ECO:0007669"/>
    <property type="project" value="UniProtKB-SubCell"/>
</dbReference>
<dbReference type="GO" id="GO:0005886">
    <property type="term" value="C:plasma membrane"/>
    <property type="evidence" value="ECO:0007669"/>
    <property type="project" value="UniProtKB-SubCell"/>
</dbReference>
<dbReference type="FunFam" id="1.10.3890.10:FF:000002">
    <property type="entry name" value="High frequency lysogenization protein HflD homolog"/>
    <property type="match status" value="1"/>
</dbReference>
<dbReference type="Gene3D" id="1.10.3890.10">
    <property type="entry name" value="HflD-like"/>
    <property type="match status" value="1"/>
</dbReference>
<dbReference type="HAMAP" id="MF_00695">
    <property type="entry name" value="HflD_protein"/>
    <property type="match status" value="1"/>
</dbReference>
<dbReference type="InterPro" id="IPR007451">
    <property type="entry name" value="HflD"/>
</dbReference>
<dbReference type="InterPro" id="IPR035932">
    <property type="entry name" value="HflD-like_sf"/>
</dbReference>
<dbReference type="NCBIfam" id="NF001246">
    <property type="entry name" value="PRK00218.1-2"/>
    <property type="match status" value="1"/>
</dbReference>
<dbReference type="NCBIfam" id="NF001248">
    <property type="entry name" value="PRK00218.1-4"/>
    <property type="match status" value="1"/>
</dbReference>
<dbReference type="PANTHER" id="PTHR38100">
    <property type="entry name" value="HIGH FREQUENCY LYSOGENIZATION PROTEIN HFLD"/>
    <property type="match status" value="1"/>
</dbReference>
<dbReference type="PANTHER" id="PTHR38100:SF1">
    <property type="entry name" value="HIGH FREQUENCY LYSOGENIZATION PROTEIN HFLD"/>
    <property type="match status" value="1"/>
</dbReference>
<dbReference type="Pfam" id="PF04356">
    <property type="entry name" value="DUF489"/>
    <property type="match status" value="1"/>
</dbReference>
<dbReference type="SUPFAM" id="SSF101322">
    <property type="entry name" value="YcfC-like"/>
    <property type="match status" value="1"/>
</dbReference>
<keyword id="KW-0997">Cell inner membrane</keyword>
<keyword id="KW-1003">Cell membrane</keyword>
<keyword id="KW-0963">Cytoplasm</keyword>
<keyword id="KW-0472">Membrane</keyword>
<comment type="subcellular location">
    <subcellularLocation>
        <location>Cytoplasm</location>
    </subcellularLocation>
    <subcellularLocation>
        <location evidence="1">Cell inner membrane</location>
        <topology evidence="1">Peripheral membrane protein</topology>
        <orientation evidence="1">Cytoplasmic side</orientation>
    </subcellularLocation>
</comment>
<comment type="similarity">
    <text evidence="1">Belongs to the HflD family.</text>
</comment>
<gene>
    <name evidence="1" type="primary">hflD</name>
    <name type="ordered locus">Shew185_2472</name>
</gene>
<protein>
    <recommendedName>
        <fullName evidence="1">High frequency lysogenization protein HflD homolog</fullName>
    </recommendedName>
</protein>
<accession>A6WP70</accession>
<organism>
    <name type="scientific">Shewanella baltica (strain OS185)</name>
    <dbReference type="NCBI Taxonomy" id="402882"/>
    <lineage>
        <taxon>Bacteria</taxon>
        <taxon>Pseudomonadati</taxon>
        <taxon>Pseudomonadota</taxon>
        <taxon>Gammaproteobacteria</taxon>
        <taxon>Alteromonadales</taxon>
        <taxon>Shewanellaceae</taxon>
        <taxon>Shewanella</taxon>
    </lineage>
</organism>